<feature type="chain" id="PRO_0000086722" description="STE20/SPS1-related proline-alanine-rich protein kinase">
    <location>
        <begin position="1"/>
        <end position="545"/>
    </location>
</feature>
<feature type="domain" description="Protein kinase" evidence="3">
    <location>
        <begin position="63"/>
        <end position="337"/>
    </location>
</feature>
<feature type="region of interest" description="Interaction with RELT" evidence="1">
    <location>
        <begin position="310"/>
        <end position="536"/>
    </location>
</feature>
<feature type="region of interest" description="Disordered" evidence="4">
    <location>
        <begin position="361"/>
        <end position="423"/>
    </location>
</feature>
<feature type="short sequence motif" description="Nuclear localization signal" evidence="2">
    <location>
        <begin position="360"/>
        <end position="366"/>
    </location>
</feature>
<feature type="short sequence motif" description="Caspase cleavage related site">
    <location>
        <begin position="387"/>
        <end position="391"/>
    </location>
</feature>
<feature type="compositionally biased region" description="Acidic residues" evidence="4">
    <location>
        <begin position="380"/>
        <end position="393"/>
    </location>
</feature>
<feature type="compositionally biased region" description="Basic and acidic residues" evidence="4">
    <location>
        <begin position="403"/>
        <end position="412"/>
    </location>
</feature>
<feature type="active site" description="Proton acceptor" evidence="3">
    <location>
        <position position="192"/>
    </location>
</feature>
<feature type="binding site" evidence="3">
    <location>
        <begin position="69"/>
        <end position="77"/>
    </location>
    <ligand>
        <name>ATP</name>
        <dbReference type="ChEBI" id="CHEBI:30616"/>
    </ligand>
</feature>
<feature type="binding site" evidence="3">
    <location>
        <position position="92"/>
    </location>
    <ligand>
        <name>ATP</name>
        <dbReference type="ChEBI" id="CHEBI:30616"/>
    </ligand>
</feature>
<feature type="modified residue" description="Phosphothreonine; by WNK1" evidence="9 10 14 15">
    <location>
        <position position="231"/>
    </location>
</feature>
<feature type="modified residue" description="Phosphothreonine" evidence="1">
    <location>
        <position position="235"/>
    </location>
</feature>
<feature type="modified residue" description="Phosphoserine; by PKC/PRKCQ" evidence="7">
    <location>
        <position position="309"/>
    </location>
</feature>
<feature type="modified residue" description="N6-acetyllysine" evidence="22">
    <location>
        <position position="349"/>
    </location>
</feature>
<feature type="modified residue" description="Phosphothreonine" evidence="26">
    <location>
        <position position="354"/>
    </location>
</feature>
<feature type="modified residue" description="Phosphoserine" evidence="21">
    <location>
        <position position="370"/>
    </location>
</feature>
<feature type="modified residue" description="Phosphoserine" evidence="10 21">
    <location>
        <position position="371"/>
    </location>
</feature>
<feature type="modified residue" description="Phosphoserine" evidence="20 21 23 24 25 26">
    <location>
        <position position="385"/>
    </location>
</feature>
<feature type="modified residue" description="Phosphoserine" evidence="1">
    <location>
        <position position="393"/>
    </location>
</feature>
<feature type="splice variant" id="VSP_055889" description="In isoform 2." evidence="18">
    <location>
        <begin position="28"/>
        <end position="46"/>
    </location>
</feature>
<feature type="mutagenesis site" description="Abolished serine/threonine-protein kinase activity." evidence="6">
    <original>K</original>
    <variation>R</variation>
    <location>
        <position position="92"/>
    </location>
</feature>
<feature type="mutagenesis site" description="Prevents phosphorylation and activation by WNK kinases." evidence="10">
    <original>T</original>
    <variation>A</variation>
    <location>
        <position position="231"/>
    </location>
</feature>
<feature type="mutagenesis site" description="Mimics phosphorylation; promoting kinase activity independently of WNK kinases." evidence="9 10 14 15">
    <original>T</original>
    <variation>E</variation>
    <variation>D</variation>
    <location>
        <position position="231"/>
    </location>
</feature>
<feature type="mutagenesis site" description="Does not affect activation by WNK kinases." evidence="10">
    <original>S</original>
    <variation>A</variation>
    <location>
        <position position="371"/>
    </location>
</feature>
<feature type="mutagenesis site" description="Does not greatly affect the kinase activity." evidence="10">
    <original>S</original>
    <variation>E</variation>
    <location>
        <position position="371"/>
    </location>
</feature>
<feature type="mutagenesis site" description="Abolished binding to WNK1 and SLC12A2/NKCC1." evidence="8">
    <original>D</original>
    <variation>A</variation>
    <location>
        <position position="477"/>
    </location>
</feature>
<feature type="mutagenesis site" description="Decreased binding to SLC12A2/NKCC1." evidence="8">
    <original>T</original>
    <variation>A</variation>
    <location>
        <position position="478"/>
    </location>
</feature>
<feature type="mutagenesis site" description="Decreased binding to SLC12A2/NKCC1." evidence="8">
    <original>V</original>
    <variation>A</variation>
    <location>
        <position position="482"/>
    </location>
</feature>
<feature type="mutagenesis site" description="Decreased binding to SLC12A2/NKCC1." evidence="8">
    <original>E</original>
    <variation>A</variation>
    <location>
        <position position="485"/>
    </location>
</feature>
<feature type="mutagenesis site" description="Abolished binding to WNK1 and SLC12A2/NKCC1." evidence="8">
    <original>L</original>
    <variation>A</variation>
    <location>
        <position position="491"/>
    </location>
</feature>
<feature type="mutagenesis site" description="Decreased binding to SLC12A2/NKCC1." evidence="8">
    <original>V</original>
    <variation>A</variation>
    <location>
        <position position="492"/>
    </location>
</feature>
<feature type="mutagenesis site" description="Decreased binding to SLC12A2/NKCC1." evidence="8">
    <original>D</original>
    <variation>A</variation>
    <location>
        <position position="496"/>
    </location>
</feature>
<feature type="mutagenesis site" description="Decreased binding to SLC12A2/NKCC1." evidence="8">
    <original>V</original>
    <variation>A</variation>
    <location>
        <position position="500"/>
    </location>
</feature>
<feature type="sequence conflict" description="In Ref. 1; AAC72238 and 3; AAD01901." evidence="19" ref="1 3">
    <original>A</original>
    <variation>AAP</variation>
    <location>
        <position position="41"/>
    </location>
</feature>
<feature type="sequence conflict" description="In Ref. 3; AAD01901." evidence="19" ref="3">
    <original>L</original>
    <variation>F</variation>
    <location>
        <position position="173"/>
    </location>
</feature>
<feature type="sequence conflict" description="In Ref. 2; AHW56588." evidence="19" ref="2">
    <original>A</original>
    <variation>V</variation>
    <location>
        <position position="416"/>
    </location>
</feature>
<feature type="strand" evidence="27">
    <location>
        <begin position="452"/>
        <end position="459"/>
    </location>
</feature>
<feature type="strand" evidence="27">
    <location>
        <begin position="465"/>
        <end position="472"/>
    </location>
</feature>
<feature type="turn" evidence="27">
    <location>
        <begin position="474"/>
        <end position="476"/>
    </location>
</feature>
<feature type="helix" evidence="27">
    <location>
        <begin position="479"/>
        <end position="488"/>
    </location>
</feature>
<feature type="helix" evidence="27">
    <location>
        <begin position="494"/>
        <end position="496"/>
    </location>
</feature>
<feature type="helix" evidence="27">
    <location>
        <begin position="497"/>
        <end position="508"/>
    </location>
</feature>
<feature type="turn" evidence="27">
    <location>
        <begin position="511"/>
        <end position="513"/>
    </location>
</feature>
<feature type="strand" evidence="27">
    <location>
        <begin position="516"/>
        <end position="520"/>
    </location>
</feature>
<feature type="strand" evidence="27">
    <location>
        <begin position="522"/>
        <end position="524"/>
    </location>
</feature>
<feature type="strand" evidence="27">
    <location>
        <begin position="526"/>
        <end position="528"/>
    </location>
</feature>
<feature type="turn" evidence="27">
    <location>
        <begin position="533"/>
        <end position="536"/>
    </location>
</feature>
<feature type="strand" evidence="27">
    <location>
        <begin position="537"/>
        <end position="544"/>
    </location>
</feature>
<keyword id="KW-0002">3D-structure</keyword>
<keyword id="KW-0007">Acetylation</keyword>
<keyword id="KW-0025">Alternative splicing</keyword>
<keyword id="KW-0067">ATP-binding</keyword>
<keyword id="KW-0963">Cytoplasm</keyword>
<keyword id="KW-0418">Kinase</keyword>
<keyword id="KW-0547">Nucleotide-binding</keyword>
<keyword id="KW-0539">Nucleus</keyword>
<keyword id="KW-0597">Phosphoprotein</keyword>
<keyword id="KW-1267">Proteomics identification</keyword>
<keyword id="KW-1185">Reference proteome</keyword>
<keyword id="KW-0723">Serine/threonine-protein kinase</keyword>
<keyword id="KW-0808">Transferase</keyword>
<sequence length="545" mass="59474">MAEPSGSPVHVQLPQQAAPVTAAAAAAPAAATAAPAPAAPAAPAPAPAPAAQAVGWPICRDAYELQEVIGSGATAVVQAALCKPRQERVAIKRINLEKCQTSMDELLKEIQAMSQCSHPNVVTYYTSFVVKDELWLVMKLLSGGSMLDIIKYIVNRGEHKNGVLEEAIIATILKEVLEGLDYLHRNGQIHRDLKAGNILLGEDGSVQIADFGVSAFLATGGDVTRNKVRKTFVGTPCWMAPEVMEQVRGYDFKADMWSFGITAIELATGAAPYHKYPPMKVLMLTLQNDPPTLETGVEDKEMMKKYGKSFRKLLSLCLQKDPSKRPTAAELLKCKFFQKAKNREYLIEKLLTRTPDIAQRAKKVRRVPGSSGHLHKTEDGDWEWSDDEMDEKSEEGKAAFSQEKSRRVKEENPEIAVSASTIPEQIQSLSVHDSQGPPNANEDYREASSCAVNLVLRLRNSRKELNDIRFEFTPGRDTADGVSQELFSAGLVDGHDVVIVAANLQKIVDDPKALKTLTFKLASGCDGSEIPDEVKLIGFAQLSVS</sequence>
<gene>
    <name type="primary">STK39</name>
    <name evidence="17" type="synonym">PASK</name>
    <name evidence="16" type="synonym">SPAK</name>
</gene>
<protein>
    <recommendedName>
        <fullName>STE20/SPS1-related proline-alanine-rich protein kinase</fullName>
        <shortName evidence="16">Ste-20-related kinase</shortName>
        <ecNumber evidence="8 11">2.7.11.1</ecNumber>
    </recommendedName>
    <alternativeName>
        <fullName>DCHT</fullName>
    </alternativeName>
    <alternativeName>
        <fullName>Serine/threonine-protein kinase 39</fullName>
    </alternativeName>
</protein>
<proteinExistence type="evidence at protein level"/>
<name>STK39_HUMAN</name>
<dbReference type="EC" id="2.7.11.1" evidence="8 11"/>
<dbReference type="EMBL" id="AF099989">
    <property type="protein sequence ID" value="AAC72238.1"/>
    <property type="molecule type" value="mRNA"/>
</dbReference>
<dbReference type="EMBL" id="KJ534948">
    <property type="protein sequence ID" value="AHW56588.1"/>
    <property type="molecule type" value="mRNA"/>
</dbReference>
<dbReference type="EMBL" id="AF030403">
    <property type="protein sequence ID" value="AAD01901.1"/>
    <property type="molecule type" value="mRNA"/>
</dbReference>
<dbReference type="EMBL" id="AC016723">
    <property type="protein sequence ID" value="AAY15003.1"/>
    <property type="molecule type" value="Genomic_DNA"/>
</dbReference>
<dbReference type="EMBL" id="AC017069">
    <property type="protein sequence ID" value="AAY14897.1"/>
    <property type="molecule type" value="Genomic_DNA"/>
</dbReference>
<dbReference type="EMBL" id="AC067940">
    <property type="protein sequence ID" value="AAY24032.1"/>
    <property type="molecule type" value="Genomic_DNA"/>
</dbReference>
<dbReference type="EMBL" id="AF017635">
    <property type="protein sequence ID" value="AAB70552.1"/>
    <property type="molecule type" value="mRNA"/>
</dbReference>
<dbReference type="CCDS" id="CCDS42770.1">
    <molecule id="Q9UEW8-1"/>
</dbReference>
<dbReference type="RefSeq" id="NP_037365.2">
    <molecule id="Q9UEW8-1"/>
    <property type="nucleotide sequence ID" value="NM_013233.3"/>
</dbReference>
<dbReference type="PDB" id="7O86">
    <property type="method" value="X-ray"/>
    <property type="resolution" value="1.73 A"/>
    <property type="chains" value="A/B=441-545"/>
</dbReference>
<dbReference type="PDBsum" id="7O86"/>
<dbReference type="SMR" id="Q9UEW8"/>
<dbReference type="BioGRID" id="118159">
    <property type="interactions" value="110"/>
</dbReference>
<dbReference type="CORUM" id="Q9UEW8"/>
<dbReference type="ELM" id="Q9UEW8"/>
<dbReference type="FunCoup" id="Q9UEW8">
    <property type="interactions" value="2515"/>
</dbReference>
<dbReference type="IntAct" id="Q9UEW8">
    <property type="interactions" value="53"/>
</dbReference>
<dbReference type="MINT" id="Q9UEW8"/>
<dbReference type="STRING" id="9606.ENSP00000348278"/>
<dbReference type="BindingDB" id="Q9UEW8"/>
<dbReference type="ChEMBL" id="CHEMBL1163108"/>
<dbReference type="DrugBank" id="DB12010">
    <property type="generic name" value="Fostamatinib"/>
</dbReference>
<dbReference type="DrugCentral" id="Q9UEW8"/>
<dbReference type="GuidetoPHARMACOLOGY" id="2224"/>
<dbReference type="GlyGen" id="Q9UEW8">
    <property type="glycosylation" value="1 site, 1 O-linked glycan (1 site)"/>
</dbReference>
<dbReference type="iPTMnet" id="Q9UEW8"/>
<dbReference type="PhosphoSitePlus" id="Q9UEW8"/>
<dbReference type="SwissPalm" id="Q9UEW8"/>
<dbReference type="BioMuta" id="STK39"/>
<dbReference type="DMDM" id="317373508"/>
<dbReference type="jPOST" id="Q9UEW8"/>
<dbReference type="MassIVE" id="Q9UEW8"/>
<dbReference type="PaxDb" id="9606-ENSP00000348278"/>
<dbReference type="PeptideAtlas" id="Q9UEW8"/>
<dbReference type="ProteomicsDB" id="84159">
    <molecule id="Q9UEW8-1"/>
</dbReference>
<dbReference type="Pumba" id="Q9UEW8"/>
<dbReference type="Antibodypedia" id="33792">
    <property type="antibodies" value="803 antibodies from 40 providers"/>
</dbReference>
<dbReference type="DNASU" id="27347"/>
<dbReference type="Ensembl" id="ENST00000355999.5">
    <molecule id="Q9UEW8-1"/>
    <property type="protein sequence ID" value="ENSP00000348278.4"/>
    <property type="gene ID" value="ENSG00000198648.12"/>
</dbReference>
<dbReference type="GeneID" id="27347"/>
<dbReference type="KEGG" id="hsa:27347"/>
<dbReference type="MANE-Select" id="ENST00000355999.5">
    <property type="protein sequence ID" value="ENSP00000348278.4"/>
    <property type="RefSeq nucleotide sequence ID" value="NM_013233.3"/>
    <property type="RefSeq protein sequence ID" value="NP_037365.2"/>
</dbReference>
<dbReference type="UCSC" id="uc002uea.4">
    <molecule id="Q9UEW8-1"/>
    <property type="organism name" value="human"/>
</dbReference>
<dbReference type="AGR" id="HGNC:17717"/>
<dbReference type="CTD" id="27347"/>
<dbReference type="DisGeNET" id="27347"/>
<dbReference type="GeneCards" id="STK39"/>
<dbReference type="HGNC" id="HGNC:17717">
    <property type="gene designation" value="STK39"/>
</dbReference>
<dbReference type="HPA" id="ENSG00000198648">
    <property type="expression patterns" value="Low tissue specificity"/>
</dbReference>
<dbReference type="MalaCards" id="STK39"/>
<dbReference type="MIM" id="607648">
    <property type="type" value="gene"/>
</dbReference>
<dbReference type="neXtProt" id="NX_Q9UEW8"/>
<dbReference type="OpenTargets" id="ENSG00000198648"/>
<dbReference type="PharmGKB" id="PA38243"/>
<dbReference type="VEuPathDB" id="HostDB:ENSG00000198648"/>
<dbReference type="eggNOG" id="KOG0582">
    <property type="taxonomic scope" value="Eukaryota"/>
</dbReference>
<dbReference type="GeneTree" id="ENSGT00940000154621"/>
<dbReference type="HOGENOM" id="CLU_000288_111_1_1"/>
<dbReference type="InParanoid" id="Q9UEW8"/>
<dbReference type="OMA" id="QEVIGHG"/>
<dbReference type="OrthoDB" id="8693905at2759"/>
<dbReference type="PAN-GO" id="Q9UEW8">
    <property type="GO annotations" value="7 GO annotations based on evolutionary models"/>
</dbReference>
<dbReference type="PhylomeDB" id="Q9UEW8"/>
<dbReference type="TreeFam" id="TF105339"/>
<dbReference type="BRENDA" id="2.7.11.1">
    <property type="organism ID" value="2681"/>
</dbReference>
<dbReference type="PathwayCommons" id="Q9UEW8"/>
<dbReference type="SignaLink" id="Q9UEW8"/>
<dbReference type="SIGNOR" id="Q9UEW8"/>
<dbReference type="BioGRID-ORCS" id="27347">
    <property type="hits" value="18 hits in 1181 CRISPR screens"/>
</dbReference>
<dbReference type="CD-CODE" id="FB4E32DD">
    <property type="entry name" value="Presynaptic clusters and postsynaptic densities"/>
</dbReference>
<dbReference type="ChiTaRS" id="STK39">
    <property type="organism name" value="human"/>
</dbReference>
<dbReference type="GeneWiki" id="STK39"/>
<dbReference type="GenomeRNAi" id="27347"/>
<dbReference type="Pharos" id="Q9UEW8">
    <property type="development level" value="Tchem"/>
</dbReference>
<dbReference type="PRO" id="PR:Q9UEW8"/>
<dbReference type="Proteomes" id="UP000005640">
    <property type="component" value="Chromosome 2"/>
</dbReference>
<dbReference type="RNAct" id="Q9UEW8">
    <property type="molecule type" value="protein"/>
</dbReference>
<dbReference type="Bgee" id="ENSG00000198648">
    <property type="expression patterns" value="Expressed in endothelial cell and 206 other cell types or tissues"/>
</dbReference>
<dbReference type="GO" id="GO:0016324">
    <property type="term" value="C:apical plasma membrane"/>
    <property type="evidence" value="ECO:0007669"/>
    <property type="project" value="Ensembl"/>
</dbReference>
<dbReference type="GO" id="GO:0016323">
    <property type="term" value="C:basolateral plasma membrane"/>
    <property type="evidence" value="ECO:0007669"/>
    <property type="project" value="Ensembl"/>
</dbReference>
<dbReference type="GO" id="GO:0044297">
    <property type="term" value="C:cell body"/>
    <property type="evidence" value="ECO:0007669"/>
    <property type="project" value="Ensembl"/>
</dbReference>
<dbReference type="GO" id="GO:0005938">
    <property type="term" value="C:cell cortex"/>
    <property type="evidence" value="ECO:0000250"/>
    <property type="project" value="ParkinsonsUK-UCL"/>
</dbReference>
<dbReference type="GO" id="GO:0005737">
    <property type="term" value="C:cytoplasm"/>
    <property type="evidence" value="ECO:0000318"/>
    <property type="project" value="GO_Central"/>
</dbReference>
<dbReference type="GO" id="GO:0005829">
    <property type="term" value="C:cytosol"/>
    <property type="evidence" value="ECO:0000314"/>
    <property type="project" value="HPA"/>
</dbReference>
<dbReference type="GO" id="GO:0043231">
    <property type="term" value="C:intracellular membrane-bounded organelle"/>
    <property type="evidence" value="ECO:0000314"/>
    <property type="project" value="HPA"/>
</dbReference>
<dbReference type="GO" id="GO:0005654">
    <property type="term" value="C:nucleoplasm"/>
    <property type="evidence" value="ECO:0000314"/>
    <property type="project" value="HPA"/>
</dbReference>
<dbReference type="GO" id="GO:0005524">
    <property type="term" value="F:ATP binding"/>
    <property type="evidence" value="ECO:0007669"/>
    <property type="project" value="UniProtKB-KW"/>
</dbReference>
<dbReference type="GO" id="GO:0099106">
    <property type="term" value="F:ion channel regulator activity"/>
    <property type="evidence" value="ECO:0000315"/>
    <property type="project" value="ParkinsonsUK-UCL"/>
</dbReference>
<dbReference type="GO" id="GO:0016301">
    <property type="term" value="F:kinase activity"/>
    <property type="evidence" value="ECO:0000250"/>
    <property type="project" value="UniProtKB"/>
</dbReference>
<dbReference type="GO" id="GO:0019870">
    <property type="term" value="F:potassium channel inhibitor activity"/>
    <property type="evidence" value="ECO:0000314"/>
    <property type="project" value="ParkinsonsUK-UCL"/>
</dbReference>
<dbReference type="GO" id="GO:0019901">
    <property type="term" value="F:protein kinase binding"/>
    <property type="evidence" value="ECO:0007669"/>
    <property type="project" value="Ensembl"/>
</dbReference>
<dbReference type="GO" id="GO:0106310">
    <property type="term" value="F:protein serine kinase activity"/>
    <property type="evidence" value="ECO:0007669"/>
    <property type="project" value="RHEA"/>
</dbReference>
<dbReference type="GO" id="GO:0004674">
    <property type="term" value="F:protein serine/threonine kinase activity"/>
    <property type="evidence" value="ECO:0000314"/>
    <property type="project" value="UniProtKB"/>
</dbReference>
<dbReference type="GO" id="GO:0044325">
    <property type="term" value="F:transmembrane transporter binding"/>
    <property type="evidence" value="ECO:0000353"/>
    <property type="project" value="ParkinsonsUK-UCL"/>
</dbReference>
<dbReference type="GO" id="GO:0141109">
    <property type="term" value="F:transporter activator activity"/>
    <property type="evidence" value="ECO:0000250"/>
    <property type="project" value="ParkinsonsUK-UCL"/>
</dbReference>
<dbReference type="GO" id="GO:0006884">
    <property type="term" value="P:cell volume homeostasis"/>
    <property type="evidence" value="ECO:0000314"/>
    <property type="project" value="UniProt"/>
</dbReference>
<dbReference type="GO" id="GO:0071474">
    <property type="term" value="P:cellular hyperosmotic response"/>
    <property type="evidence" value="ECO:0000314"/>
    <property type="project" value="UniProt"/>
</dbReference>
<dbReference type="GO" id="GO:0071476">
    <property type="term" value="P:cellular hypotonic response"/>
    <property type="evidence" value="ECO:0000314"/>
    <property type="project" value="ParkinsonsUK-UCL"/>
</dbReference>
<dbReference type="GO" id="GO:1990869">
    <property type="term" value="P:cellular response to chemokine"/>
    <property type="evidence" value="ECO:0000315"/>
    <property type="project" value="BHF-UCL"/>
</dbReference>
<dbReference type="GO" id="GO:0035865">
    <property type="term" value="P:cellular response to potassium ion"/>
    <property type="evidence" value="ECO:0007669"/>
    <property type="project" value="Ensembl"/>
</dbReference>
<dbReference type="GO" id="GO:0038146">
    <property type="term" value="P:chemokine (C-X-C motif) ligand 12 signaling pathway"/>
    <property type="evidence" value="ECO:0000315"/>
    <property type="project" value="BHF-UCL"/>
</dbReference>
<dbReference type="GO" id="GO:0006954">
    <property type="term" value="P:inflammatory response"/>
    <property type="evidence" value="ECO:0007669"/>
    <property type="project" value="Ensembl"/>
</dbReference>
<dbReference type="GO" id="GO:0030644">
    <property type="term" value="P:intracellular chloride ion homeostasis"/>
    <property type="evidence" value="ECO:0007669"/>
    <property type="project" value="Ensembl"/>
</dbReference>
<dbReference type="GO" id="GO:0035556">
    <property type="term" value="P:intracellular signal transduction"/>
    <property type="evidence" value="ECO:0000314"/>
    <property type="project" value="ParkinsonsUK-UCL"/>
</dbReference>
<dbReference type="GO" id="GO:0042116">
    <property type="term" value="P:macrophage activation"/>
    <property type="evidence" value="ECO:0007669"/>
    <property type="project" value="Ensembl"/>
</dbReference>
<dbReference type="GO" id="GO:0036438">
    <property type="term" value="P:maintenance of lens transparency"/>
    <property type="evidence" value="ECO:0000250"/>
    <property type="project" value="ParkinsonsUK-UCL"/>
</dbReference>
<dbReference type="GO" id="GO:1905408">
    <property type="term" value="P:negative regulation of creatine transmembrane transporter activity"/>
    <property type="evidence" value="ECO:0000314"/>
    <property type="project" value="ParkinsonsUK-UCL"/>
</dbReference>
<dbReference type="GO" id="GO:0090188">
    <property type="term" value="P:negative regulation of pancreatic juice secretion"/>
    <property type="evidence" value="ECO:0007669"/>
    <property type="project" value="Ensembl"/>
</dbReference>
<dbReference type="GO" id="GO:1901380">
    <property type="term" value="P:negative regulation of potassium ion transmembrane transport"/>
    <property type="evidence" value="ECO:0000314"/>
    <property type="project" value="ParkinsonsUK-UCL"/>
</dbReference>
<dbReference type="GO" id="GO:2000650">
    <property type="term" value="P:negative regulation of sodium ion transmembrane transporter activity"/>
    <property type="evidence" value="ECO:0000314"/>
    <property type="project" value="ParkinsonsUK-UCL"/>
</dbReference>
<dbReference type="GO" id="GO:0018105">
    <property type="term" value="P:peptidyl-serine phosphorylation"/>
    <property type="evidence" value="ECO:0000315"/>
    <property type="project" value="UniProtKB"/>
</dbReference>
<dbReference type="GO" id="GO:0018107">
    <property type="term" value="P:peptidyl-threonine phosphorylation"/>
    <property type="evidence" value="ECO:0000315"/>
    <property type="project" value="UniProtKB"/>
</dbReference>
<dbReference type="GO" id="GO:1900745">
    <property type="term" value="P:positive regulation of p38MAPK cascade"/>
    <property type="evidence" value="ECO:0000315"/>
    <property type="project" value="UniProtKB"/>
</dbReference>
<dbReference type="GO" id="GO:1903288">
    <property type="term" value="P:positive regulation of potassium ion import across plasma membrane"/>
    <property type="evidence" value="ECO:0000250"/>
    <property type="project" value="ParkinsonsUK-UCL"/>
</dbReference>
<dbReference type="GO" id="GO:1903784">
    <property type="term" value="P:positive regulation of sodium ion import across plasma membrane"/>
    <property type="evidence" value="ECO:0000250"/>
    <property type="project" value="ParkinsonsUK-UCL"/>
</dbReference>
<dbReference type="GO" id="GO:0010820">
    <property type="term" value="P:positive regulation of T cell chemotaxis"/>
    <property type="evidence" value="ECO:0000315"/>
    <property type="project" value="BHF-UCL"/>
</dbReference>
<dbReference type="GO" id="GO:0046777">
    <property type="term" value="P:protein autophosphorylation"/>
    <property type="evidence" value="ECO:0000315"/>
    <property type="project" value="UniProtKB"/>
</dbReference>
<dbReference type="GO" id="GO:0006468">
    <property type="term" value="P:protein phosphorylation"/>
    <property type="evidence" value="ECO:0000250"/>
    <property type="project" value="UniProtKB"/>
</dbReference>
<dbReference type="GO" id="GO:0008217">
    <property type="term" value="P:regulation of blood pressure"/>
    <property type="evidence" value="ECO:0007669"/>
    <property type="project" value="Ensembl"/>
</dbReference>
<dbReference type="GO" id="GO:0050727">
    <property type="term" value="P:regulation of inflammatory response"/>
    <property type="evidence" value="ECO:0007669"/>
    <property type="project" value="Ensembl"/>
</dbReference>
<dbReference type="GO" id="GO:1904062">
    <property type="term" value="P:regulation of monoatomic cation transmembrane transport"/>
    <property type="evidence" value="ECO:0000250"/>
    <property type="project" value="ARUK-UCL"/>
</dbReference>
<dbReference type="GO" id="GO:0070294">
    <property type="term" value="P:renal sodium ion absorption"/>
    <property type="evidence" value="ECO:0000314"/>
    <property type="project" value="UniProt"/>
</dbReference>
<dbReference type="GO" id="GO:1904044">
    <property type="term" value="P:response to aldosterone"/>
    <property type="evidence" value="ECO:0007669"/>
    <property type="project" value="Ensembl"/>
</dbReference>
<dbReference type="GO" id="GO:0002021">
    <property type="term" value="P:response to dietary excess"/>
    <property type="evidence" value="ECO:0007669"/>
    <property type="project" value="Ensembl"/>
</dbReference>
<dbReference type="GO" id="GO:0007165">
    <property type="term" value="P:signal transduction"/>
    <property type="evidence" value="ECO:0000314"/>
    <property type="project" value="ParkinsonsUK-UCL"/>
</dbReference>
<dbReference type="GO" id="GO:0035725">
    <property type="term" value="P:sodium ion transmembrane transport"/>
    <property type="evidence" value="ECO:0007669"/>
    <property type="project" value="Ensembl"/>
</dbReference>
<dbReference type="CDD" id="cd06610">
    <property type="entry name" value="STKc_OSR1_SPAK"/>
    <property type="match status" value="1"/>
</dbReference>
<dbReference type="FunFam" id="3.10.20.90:FF:000043">
    <property type="entry name" value="serine/threonine-protein kinase OSR1 isoform X1"/>
    <property type="match status" value="1"/>
</dbReference>
<dbReference type="FunFam" id="3.30.200.20:FF:000114">
    <property type="entry name" value="serine/threonine-protein kinase OSR1 isoform X1"/>
    <property type="match status" value="1"/>
</dbReference>
<dbReference type="FunFam" id="1.10.510.10:FF:000068">
    <property type="entry name" value="STE20/SPS1-related proline-alanine-rich protein kinase"/>
    <property type="match status" value="1"/>
</dbReference>
<dbReference type="Gene3D" id="3.10.20.90">
    <property type="entry name" value="Phosphatidylinositol 3-kinase Catalytic Subunit, Chain A, domain 1"/>
    <property type="match status" value="1"/>
</dbReference>
<dbReference type="Gene3D" id="3.30.200.20">
    <property type="entry name" value="Phosphorylase Kinase, domain 1"/>
    <property type="match status" value="1"/>
</dbReference>
<dbReference type="Gene3D" id="1.10.510.10">
    <property type="entry name" value="Transferase(Phosphotransferase) domain 1"/>
    <property type="match status" value="1"/>
</dbReference>
<dbReference type="InterPro" id="IPR011009">
    <property type="entry name" value="Kinase-like_dom_sf"/>
</dbReference>
<dbReference type="InterPro" id="IPR024678">
    <property type="entry name" value="Kinase_OSR1/WNK_CCT"/>
</dbReference>
<dbReference type="InterPro" id="IPR000719">
    <property type="entry name" value="Prot_kinase_dom"/>
</dbReference>
<dbReference type="InterPro" id="IPR017441">
    <property type="entry name" value="Protein_kinase_ATP_BS"/>
</dbReference>
<dbReference type="InterPro" id="IPR050629">
    <property type="entry name" value="STE20/SPS1-PAK"/>
</dbReference>
<dbReference type="PANTHER" id="PTHR48012:SF14">
    <property type="entry name" value="STE20_SPS1-RELATED PROLINE-ALANINE-RICH PROTEIN KINASE"/>
    <property type="match status" value="1"/>
</dbReference>
<dbReference type="PANTHER" id="PTHR48012">
    <property type="entry name" value="STERILE20-LIKE KINASE, ISOFORM B-RELATED"/>
    <property type="match status" value="1"/>
</dbReference>
<dbReference type="Pfam" id="PF12202">
    <property type="entry name" value="OSR1_C"/>
    <property type="match status" value="1"/>
</dbReference>
<dbReference type="Pfam" id="PF00069">
    <property type="entry name" value="Pkinase"/>
    <property type="match status" value="1"/>
</dbReference>
<dbReference type="SMART" id="SM00220">
    <property type="entry name" value="S_TKc"/>
    <property type="match status" value="1"/>
</dbReference>
<dbReference type="SUPFAM" id="SSF56112">
    <property type="entry name" value="Protein kinase-like (PK-like)"/>
    <property type="match status" value="1"/>
</dbReference>
<dbReference type="PROSITE" id="PS00107">
    <property type="entry name" value="PROTEIN_KINASE_ATP"/>
    <property type="match status" value="1"/>
</dbReference>
<dbReference type="PROSITE" id="PS50011">
    <property type="entry name" value="PROTEIN_KINASE_DOM"/>
    <property type="match status" value="1"/>
</dbReference>
<accession>Q9UEW8</accession>
<accession>O14774</accession>
<accession>Q53S90</accession>
<accession>Q53SL7</accession>
<accession>Q53SS1</accession>
<accession>Q9UER4</accession>
<accession>X5D9C8</accession>
<evidence type="ECO:0000250" key="1">
    <source>
        <dbReference type="UniProtKB" id="Q9Z1W9"/>
    </source>
</evidence>
<evidence type="ECO:0000255" key="2"/>
<evidence type="ECO:0000255" key="3">
    <source>
        <dbReference type="PROSITE-ProRule" id="PRU00159"/>
    </source>
</evidence>
<evidence type="ECO:0000256" key="4">
    <source>
        <dbReference type="SAM" id="MobiDB-lite"/>
    </source>
</evidence>
<evidence type="ECO:0000269" key="5">
    <source>
    </source>
</evidence>
<evidence type="ECO:0000269" key="6">
    <source>
    </source>
</evidence>
<evidence type="ECO:0000269" key="7">
    <source>
    </source>
</evidence>
<evidence type="ECO:0000269" key="8">
    <source>
    </source>
</evidence>
<evidence type="ECO:0000269" key="9">
    <source>
    </source>
</evidence>
<evidence type="ECO:0000269" key="10">
    <source>
    </source>
</evidence>
<evidence type="ECO:0000269" key="11">
    <source>
    </source>
</evidence>
<evidence type="ECO:0000269" key="12">
    <source>
    </source>
</evidence>
<evidence type="ECO:0000269" key="13">
    <source>
    </source>
</evidence>
<evidence type="ECO:0000269" key="14">
    <source>
    </source>
</evidence>
<evidence type="ECO:0000269" key="15">
    <source>
    </source>
</evidence>
<evidence type="ECO:0000303" key="16">
    <source>
    </source>
</evidence>
<evidence type="ECO:0000303" key="17">
    <source>
    </source>
</evidence>
<evidence type="ECO:0000303" key="18">
    <source>
    </source>
</evidence>
<evidence type="ECO:0000305" key="19"/>
<evidence type="ECO:0007744" key="20">
    <source>
    </source>
</evidence>
<evidence type="ECO:0007744" key="21">
    <source>
    </source>
</evidence>
<evidence type="ECO:0007744" key="22">
    <source>
    </source>
</evidence>
<evidence type="ECO:0007744" key="23">
    <source>
    </source>
</evidence>
<evidence type="ECO:0007744" key="24">
    <source>
    </source>
</evidence>
<evidence type="ECO:0007744" key="25">
    <source>
    </source>
</evidence>
<evidence type="ECO:0007744" key="26">
    <source>
    </source>
</evidence>
<evidence type="ECO:0007829" key="27">
    <source>
        <dbReference type="PDB" id="7O86"/>
    </source>
</evidence>
<comment type="function">
    <text evidence="1 6 8 11 12 14 15">Effector serine/threonine-protein kinase component of the WNK-SPAK/OSR1 kinase cascade, which is involved in various processes, such as ion transport, response to hypertonic stress and blood pressure (PubMed:16669787, PubMed:18270262, PubMed:21321328, PubMed:34289367). Specifically recognizes and binds proteins with a RFXV motif (PubMed:16669787, PubMed:21321328). Acts downstream of WNK kinases (WNK1, WNK2, WNK3 or WNK4): following activation by WNK kinases, catalyzes phosphorylation of ion cotransporters, such as SLC12A1/NKCC2, SLC12A2/NKCC1, SLC12A3/NCC, SLC12A5/KCC2 or SLC12A6/KCC3, regulating their activity (PubMed:21321328). Mediates regulatory volume increase in response to hyperosmotic stress by catalyzing phosphorylation of ion cotransporters SLC12A1/NKCC2, SLC12A2/NKCC1 and SLC12A6/KCC3 downstream of WNK1 and WNK3 kinases (PubMed:12740379, PubMed:16669787, PubMed:21321328). Phosphorylation of Na-K-Cl cotransporters SLC12A2/NKCC1 and SLC12A2/NKCC1 promote their activation and ion influx; simultaneously, phosphorylation of K-Cl cotransporters SLC12A5/KCC2 and SLC12A6/KCC3 inhibit their activity, blocking ion efflux (PubMed:16669787, PubMed:19665974, PubMed:21321328). Acts as a regulator of NaCl reabsorption in the distal nephron by mediating phosphorylation and activation of the thiazide-sensitive Na-Cl cotransporter SLC12A3/NCC in distal convoluted tubule cells of kidney downstream of WNK4 (PubMed:18270262). Mediates the inhibition of SLC4A4, SLC26A6 as well as CFTR activities (By similarity). Phosphorylates RELT (By similarity).</text>
</comment>
<comment type="catalytic activity">
    <reaction>
        <text>L-seryl-[protein] + ATP = O-phospho-L-seryl-[protein] + ADP + H(+)</text>
        <dbReference type="Rhea" id="RHEA:17989"/>
        <dbReference type="Rhea" id="RHEA-COMP:9863"/>
        <dbReference type="Rhea" id="RHEA-COMP:11604"/>
        <dbReference type="ChEBI" id="CHEBI:15378"/>
        <dbReference type="ChEBI" id="CHEBI:29999"/>
        <dbReference type="ChEBI" id="CHEBI:30616"/>
        <dbReference type="ChEBI" id="CHEBI:83421"/>
        <dbReference type="ChEBI" id="CHEBI:456216"/>
        <dbReference type="EC" id="2.7.11.1"/>
    </reaction>
</comment>
<comment type="catalytic activity">
    <reaction evidence="8 11">
        <text>L-threonyl-[protein] + ATP = O-phospho-L-threonyl-[protein] + ADP + H(+)</text>
        <dbReference type="Rhea" id="RHEA:46608"/>
        <dbReference type="Rhea" id="RHEA-COMP:11060"/>
        <dbReference type="Rhea" id="RHEA-COMP:11605"/>
        <dbReference type="ChEBI" id="CHEBI:15378"/>
        <dbReference type="ChEBI" id="CHEBI:30013"/>
        <dbReference type="ChEBI" id="CHEBI:30616"/>
        <dbReference type="ChEBI" id="CHEBI:61977"/>
        <dbReference type="ChEBI" id="CHEBI:456216"/>
        <dbReference type="EC" id="2.7.11.1"/>
    </reaction>
</comment>
<comment type="cofactor">
    <cofactor evidence="1">
        <name>Mn(2+)</name>
        <dbReference type="ChEBI" id="CHEBI:29035"/>
    </cofactor>
</comment>
<comment type="activity regulation">
    <text evidence="9 10 14 15">Activated following phosphorylation at Thr-231 by WNK kinases (WNK1, WNK2, WNK3 or WNK4) (PubMed:16832045, PubMed:17190791, PubMed:21321328, PubMed:34289367). Specifically inhibited by YU239252 (YU252) (PubMed:34289367).</text>
</comment>
<comment type="subunit">
    <text evidence="1 13">The phosphorylated form forms a complex with WNK2 (By similarity). Interacts with SORL1 (via cytosolic C-terminus) (PubMed:20385770).</text>
</comment>
<comment type="interaction">
    <interactant intactId="EBI-2680974">
        <id>Q9UEW8</id>
    </interactant>
    <interactant intactId="EBI-306905">
        <id>Q9Y376</id>
        <label>CAB39</label>
    </interactant>
    <organismsDiffer>false</organismsDiffer>
    <experiments>4</experiments>
</comment>
<comment type="subcellular location">
    <subcellularLocation>
        <location evidence="19">Cytoplasm</location>
    </subcellularLocation>
    <subcellularLocation>
        <location evidence="19">Nucleus</location>
    </subcellularLocation>
    <text evidence="19">Nucleus when caspase-cleaved.</text>
</comment>
<comment type="alternative products">
    <event type="alternative splicing"/>
    <isoform>
        <id>Q9UEW8-1</id>
        <name>1</name>
        <sequence type="displayed"/>
    </isoform>
    <isoform>
        <id>Q9UEW8-2</id>
        <name>2</name>
        <name>A</name>
        <sequence type="described" ref="VSP_055889"/>
    </isoform>
</comment>
<comment type="tissue specificity">
    <text evidence="5">Predominantly expressed in brain and pancreas followed by heart, lung, kidney, skeletal muscle, liver, placenta and testis.</text>
</comment>
<comment type="domain">
    <text evidence="5">PAPA box (proline-alanine repeats) may target the kinase to a specific subcellular location by facilitating interaction with intracellular proteins such as actin or actin-like proteins.</text>
</comment>
<comment type="PTM">
    <text evidence="1 7 9 10 14 15">Phosphorylation at Thr-231 by WNK kinases (WNK1, WNK2, WNK3 or WNK4) is required for activation (PubMed:16832045, PubMed:17190791, PubMed:21321328, PubMed:34289367). Autophosphorylation at Thr-231 positively regulates its activity (By similarity). Phosphorylated at Ser-309 by PRKCQ (PubMed:14988727).</text>
</comment>
<comment type="similarity">
    <text evidence="19">Belongs to the protein kinase superfamily. STE Ser/Thr protein kinase family. STE20 subfamily.</text>
</comment>
<organism>
    <name type="scientific">Homo sapiens</name>
    <name type="common">Human</name>
    <dbReference type="NCBI Taxonomy" id="9606"/>
    <lineage>
        <taxon>Eukaryota</taxon>
        <taxon>Metazoa</taxon>
        <taxon>Chordata</taxon>
        <taxon>Craniata</taxon>
        <taxon>Vertebrata</taxon>
        <taxon>Euteleostomi</taxon>
        <taxon>Mammalia</taxon>
        <taxon>Eutheria</taxon>
        <taxon>Euarchontoglires</taxon>
        <taxon>Primates</taxon>
        <taxon>Haplorrhini</taxon>
        <taxon>Catarrhini</taxon>
        <taxon>Hominidae</taxon>
        <taxon>Homo</taxon>
    </lineage>
</organism>
<reference key="1">
    <citation type="journal article" date="2000" name="Oncogene">
        <title>SPAK, a STE20/SPS1-related kinase that activates the p38 pathway.</title>
        <authorList>
            <person name="Johnston A.M."/>
            <person name="Naselli G."/>
            <person name="Gonez L.J."/>
            <person name="Martin R.M."/>
            <person name="Harrison L.C."/>
            <person name="de Aizpurua H.J."/>
        </authorList>
    </citation>
    <scope>NUCLEOTIDE SEQUENCE [MRNA] (ISOFORM 1)</scope>
    <scope>TISSUE SPECIFICITY</scope>
    <source>
        <tissue>Brain</tissue>
    </source>
</reference>
<reference key="2">
    <citation type="journal article" date="2014" name="Nat. Commun.">
        <title>Protein interaction network of alternatively spliced isoforms from brain links genetic risk factors for autism.</title>
        <authorList>
            <person name="Corominas R."/>
            <person name="Yang X."/>
            <person name="Lin G.N."/>
            <person name="Kang S."/>
            <person name="Shen Y."/>
            <person name="Ghamsari L."/>
            <person name="Broly M."/>
            <person name="Rodriguez M."/>
            <person name="Tam S."/>
            <person name="Wanamaker S.A."/>
            <person name="Fan C."/>
            <person name="Yi S."/>
            <person name="Tasan M."/>
            <person name="Lemmens I."/>
            <person name="Kuang X."/>
            <person name="Zhao N."/>
            <person name="Malhotra D."/>
            <person name="Michaelson J.J."/>
            <person name="Vacic V."/>
            <person name="Calderwood M.A."/>
            <person name="Roth F.P."/>
            <person name="Tavernier J."/>
            <person name="Horvath S."/>
            <person name="Salehi-Ashtiani K."/>
            <person name="Korkin D."/>
            <person name="Sebat J."/>
            <person name="Hill D.E."/>
            <person name="Hao T."/>
            <person name="Vidal M."/>
            <person name="Iakoucheva L.M."/>
        </authorList>
    </citation>
    <scope>NUCLEOTIDE SEQUENCE [MRNA] (ISOFORM 2)</scope>
    <source>
        <tissue>Brain</tissue>
    </source>
</reference>
<reference key="3">
    <citation type="submission" date="1997-10" db="EMBL/GenBank/DDBJ databases">
        <title>New human member of the Ste20 family.</title>
        <authorList>
            <person name="Melnick M.B."/>
            <person name="Petitt M."/>
            <person name="Perrimon N."/>
            <person name="Comb M.J."/>
        </authorList>
    </citation>
    <scope>NUCLEOTIDE SEQUENCE [MRNA] (ISOFORM 1)</scope>
</reference>
<reference key="4">
    <citation type="journal article" date="2005" name="Nature">
        <title>Generation and annotation of the DNA sequences of human chromosomes 2 and 4.</title>
        <authorList>
            <person name="Hillier L.W."/>
            <person name="Graves T.A."/>
            <person name="Fulton R.S."/>
            <person name="Fulton L.A."/>
            <person name="Pepin K.H."/>
            <person name="Minx P."/>
            <person name="Wagner-McPherson C."/>
            <person name="Layman D."/>
            <person name="Wylie K."/>
            <person name="Sekhon M."/>
            <person name="Becker M.C."/>
            <person name="Fewell G.A."/>
            <person name="Delehaunty K.D."/>
            <person name="Miner T.L."/>
            <person name="Nash W.E."/>
            <person name="Kremitzki C."/>
            <person name="Oddy L."/>
            <person name="Du H."/>
            <person name="Sun H."/>
            <person name="Bradshaw-Cordum H."/>
            <person name="Ali J."/>
            <person name="Carter J."/>
            <person name="Cordes M."/>
            <person name="Harris A."/>
            <person name="Isak A."/>
            <person name="van Brunt A."/>
            <person name="Nguyen C."/>
            <person name="Du F."/>
            <person name="Courtney L."/>
            <person name="Kalicki J."/>
            <person name="Ozersky P."/>
            <person name="Abbott S."/>
            <person name="Armstrong J."/>
            <person name="Belter E.A."/>
            <person name="Caruso L."/>
            <person name="Cedroni M."/>
            <person name="Cotton M."/>
            <person name="Davidson T."/>
            <person name="Desai A."/>
            <person name="Elliott G."/>
            <person name="Erb T."/>
            <person name="Fronick C."/>
            <person name="Gaige T."/>
            <person name="Haakenson W."/>
            <person name="Haglund K."/>
            <person name="Holmes A."/>
            <person name="Harkins R."/>
            <person name="Kim K."/>
            <person name="Kruchowski S.S."/>
            <person name="Strong C.M."/>
            <person name="Grewal N."/>
            <person name="Goyea E."/>
            <person name="Hou S."/>
            <person name="Levy A."/>
            <person name="Martinka S."/>
            <person name="Mead K."/>
            <person name="McLellan M.D."/>
            <person name="Meyer R."/>
            <person name="Randall-Maher J."/>
            <person name="Tomlinson C."/>
            <person name="Dauphin-Kohlberg S."/>
            <person name="Kozlowicz-Reilly A."/>
            <person name="Shah N."/>
            <person name="Swearengen-Shahid S."/>
            <person name="Snider J."/>
            <person name="Strong J.T."/>
            <person name="Thompson J."/>
            <person name="Yoakum M."/>
            <person name="Leonard S."/>
            <person name="Pearman C."/>
            <person name="Trani L."/>
            <person name="Radionenko M."/>
            <person name="Waligorski J.E."/>
            <person name="Wang C."/>
            <person name="Rock S.M."/>
            <person name="Tin-Wollam A.-M."/>
            <person name="Maupin R."/>
            <person name="Latreille P."/>
            <person name="Wendl M.C."/>
            <person name="Yang S.-P."/>
            <person name="Pohl C."/>
            <person name="Wallis J.W."/>
            <person name="Spieth J."/>
            <person name="Bieri T.A."/>
            <person name="Berkowicz N."/>
            <person name="Nelson J.O."/>
            <person name="Osborne J."/>
            <person name="Ding L."/>
            <person name="Meyer R."/>
            <person name="Sabo A."/>
            <person name="Shotland Y."/>
            <person name="Sinha P."/>
            <person name="Wohldmann P.E."/>
            <person name="Cook L.L."/>
            <person name="Hickenbotham M.T."/>
            <person name="Eldred J."/>
            <person name="Williams D."/>
            <person name="Jones T.A."/>
            <person name="She X."/>
            <person name="Ciccarelli F.D."/>
            <person name="Izaurralde E."/>
            <person name="Taylor J."/>
            <person name="Schmutz J."/>
            <person name="Myers R.M."/>
            <person name="Cox D.R."/>
            <person name="Huang X."/>
            <person name="McPherson J.D."/>
            <person name="Mardis E.R."/>
            <person name="Clifton S.W."/>
            <person name="Warren W.C."/>
            <person name="Chinwalla A.T."/>
            <person name="Eddy S.R."/>
            <person name="Marra M.A."/>
            <person name="Ovcharenko I."/>
            <person name="Furey T.S."/>
            <person name="Miller W."/>
            <person name="Eichler E.E."/>
            <person name="Bork P."/>
            <person name="Suyama M."/>
            <person name="Torrents D."/>
            <person name="Waterston R.H."/>
            <person name="Wilson R.K."/>
        </authorList>
    </citation>
    <scope>NUCLEOTIDE SEQUENCE [LARGE SCALE GENOMIC DNA]</scope>
</reference>
<reference key="5">
    <citation type="submission" date="1997-08" db="EMBL/GenBank/DDBJ databases">
        <authorList>
            <person name="Baytel D."/>
            <person name="Don J."/>
        </authorList>
    </citation>
    <scope>NUCLEOTIDE SEQUENCE [MRNA] OF 279-545 (ISOFORM 1)</scope>
    <source>
        <tissue>Testis</tissue>
    </source>
</reference>
<reference key="6">
    <citation type="journal article" date="2003" name="J. Biol. Chem.">
        <title>PASK (proline-alanine-rich STE20-related kinase), a regulatory kinase of the Na-K-Cl cotransporter (NKCC1).</title>
        <authorList>
            <person name="Dowd B.F.X."/>
            <person name="Forbush B."/>
        </authorList>
    </citation>
    <scope>FUNCTION</scope>
    <scope>MUTAGENESIS OF LYS-92</scope>
</reference>
<reference key="7">
    <citation type="journal article" date="2004" name="EMBO J.">
        <title>SPAK kinase is a substrate and target of PKCtheta in T-cell receptor-induced AP-1 activation pathway.</title>
        <authorList>
            <person name="Li Y."/>
            <person name="Hu J."/>
            <person name="Vita R."/>
            <person name="Sun B."/>
            <person name="Tabata H."/>
            <person name="Altman A."/>
        </authorList>
    </citation>
    <scope>PHOSPHORYLATION AT SER-309</scope>
</reference>
<reference key="8">
    <citation type="journal article" date="2006" name="Biochem. J.">
        <title>Functional interactions of the SPAK/OSR1 kinases with their upstream activator WNK1 and downstream substrate NKCC1.</title>
        <authorList>
            <person name="Vitari A.C."/>
            <person name="Thastrup J."/>
            <person name="Rafiqi F.H."/>
            <person name="Deak M."/>
            <person name="Morrice N.A."/>
            <person name="Karlsson H.K."/>
            <person name="Alessi D.R."/>
        </authorList>
    </citation>
    <scope>FUNCTION</scope>
    <scope>CATALYTIC ACTIVITY</scope>
    <scope>MUTAGENESIS OF ASP-477; THR-478; VAL-482; GLU-485; LEU-491; VAL-492; ASP-496 AND VAL-500</scope>
</reference>
<reference key="9">
    <citation type="journal article" date="2006" name="Proc. Natl. Acad. Sci. U.S.A.">
        <title>WNK1 and OSR1 regulate the Na+, K+, 2Cl- cotransporter in HeLa cells.</title>
        <authorList>
            <person name="Anselmo A.N."/>
            <person name="Earnest S."/>
            <person name="Chen W."/>
            <person name="Juang Y.C."/>
            <person name="Kim S.C."/>
            <person name="Zhao Y."/>
            <person name="Cobb M.H."/>
        </authorList>
    </citation>
    <scope>ACTIVITY REGULATION</scope>
    <scope>PHOSPHORYLATION AT THR-231</scope>
    <scope>MUTAGENESIS OF THR-231</scope>
</reference>
<reference key="10">
    <citation type="journal article" date="2007" name="Electrophoresis">
        <title>Toward a global characterization of the phosphoproteome in prostate cancer cells: identification of phosphoproteins in the LNCaP cell line.</title>
        <authorList>
            <person name="Giorgianni F."/>
            <person name="Zhao Y."/>
            <person name="Desiderio D.M."/>
            <person name="Beranova-Giorgianni S."/>
        </authorList>
    </citation>
    <scope>PHOSPHORYLATION [LARGE SCALE ANALYSIS] AT SER-385</scope>
    <scope>IDENTIFICATION BY MASS SPECTROMETRY [LARGE SCALE ANALYSIS]</scope>
    <source>
        <tissue>Prostate cancer</tissue>
    </source>
</reference>
<reference key="11">
    <citation type="journal article" date="2007" name="J. Cell Biol.">
        <title>Regulation of activity and localization of the WNK1 protein kinase by hyperosmotic stress.</title>
        <authorList>
            <person name="Zagorska A."/>
            <person name="Pozo-Guisado E."/>
            <person name="Boudeau J."/>
            <person name="Vitari A.C."/>
            <person name="Rafiqi F.H."/>
            <person name="Thastrup J."/>
            <person name="Deak M."/>
            <person name="Campbell D.G."/>
            <person name="Morrice N.A."/>
            <person name="Prescott A.R."/>
            <person name="Alessi D.R."/>
        </authorList>
    </citation>
    <scope>ACTIVITY REGULATION</scope>
    <scope>PHOSPHORYLATION AT THR-231 AND SER-371</scope>
    <scope>MUTAGENESIS OF THR-231 AND SER-371</scope>
</reference>
<reference key="12">
    <citation type="journal article" date="2008" name="J. Proteome Res.">
        <title>Phosphoproteome of resting human platelets.</title>
        <authorList>
            <person name="Zahedi R.P."/>
            <person name="Lewandrowski U."/>
            <person name="Wiesner J."/>
            <person name="Wortelkamp S."/>
            <person name="Moebius J."/>
            <person name="Schuetz C."/>
            <person name="Walter U."/>
            <person name="Gambaryan S."/>
            <person name="Sickmann A."/>
        </authorList>
    </citation>
    <scope>PHOSPHORYLATION [LARGE SCALE ANALYSIS] AT SER-370; SER-371 AND SER-385</scope>
    <scope>IDENTIFICATION BY MASS SPECTROMETRY [LARGE SCALE ANALYSIS]</scope>
    <source>
        <tissue>Platelet</tissue>
    </source>
</reference>
<reference key="13">
    <citation type="journal article" date="2009" name="Anal. Chem.">
        <title>Lys-N and trypsin cover complementary parts of the phosphoproteome in a refined SCX-based approach.</title>
        <authorList>
            <person name="Gauci S."/>
            <person name="Helbig A.O."/>
            <person name="Slijper M."/>
            <person name="Krijgsveld J."/>
            <person name="Heck A.J."/>
            <person name="Mohammed S."/>
        </authorList>
    </citation>
    <scope>IDENTIFICATION BY MASS SPECTROMETRY [LARGE SCALE ANALYSIS]</scope>
</reference>
<reference key="14">
    <citation type="journal article" date="2009" name="Cell">
        <title>Sites of regulated phosphorylation that control K-Cl cotransporter activity.</title>
        <authorList>
            <person name="Rinehart J."/>
            <person name="Maksimova Y.D."/>
            <person name="Tanis J.E."/>
            <person name="Stone K.L."/>
            <person name="Hodson C.A."/>
            <person name="Zhang J."/>
            <person name="Risinger M."/>
            <person name="Pan W."/>
            <person name="Wu D."/>
            <person name="Colangelo C.M."/>
            <person name="Forbush B."/>
            <person name="Joiner C.H."/>
            <person name="Gulcicek E.E."/>
            <person name="Gallagher P.G."/>
            <person name="Lifton R.P."/>
        </authorList>
    </citation>
    <scope>FUNCTION</scope>
</reference>
<reference key="15">
    <citation type="journal article" date="2009" name="Sci. Signal.">
        <title>Quantitative phosphoproteomic analysis of T cell receptor signaling reveals system-wide modulation of protein-protein interactions.</title>
        <authorList>
            <person name="Mayya V."/>
            <person name="Lundgren D.H."/>
            <person name="Hwang S.-I."/>
            <person name="Rezaul K."/>
            <person name="Wu L."/>
            <person name="Eng J.K."/>
            <person name="Rodionov V."/>
            <person name="Han D.K."/>
        </authorList>
    </citation>
    <scope>PHOSPHORYLATION [LARGE SCALE ANALYSIS] AT SER-385</scope>
    <scope>IDENTIFICATION BY MASS SPECTROMETRY [LARGE SCALE ANALYSIS]</scope>
    <source>
        <tissue>Leukemic T-cell</tissue>
    </source>
</reference>
<reference key="16">
    <citation type="journal article" date="2009" name="Science">
        <title>Lysine acetylation targets protein complexes and co-regulates major cellular functions.</title>
        <authorList>
            <person name="Choudhary C."/>
            <person name="Kumar C."/>
            <person name="Gnad F."/>
            <person name="Nielsen M.L."/>
            <person name="Rehman M."/>
            <person name="Walther T.C."/>
            <person name="Olsen J.V."/>
            <person name="Mann M."/>
        </authorList>
    </citation>
    <scope>ACETYLATION [LARGE SCALE ANALYSIS] AT LYS-349</scope>
    <scope>IDENTIFICATION BY MASS SPECTROMETRY [LARGE SCALE ANALYSIS]</scope>
</reference>
<reference key="17">
    <citation type="journal article" date="2008" name="J. Cell Sci.">
        <title>Activation of the thiazide-sensitive Na+-Cl- cotransporter by the WNK-regulated kinases SPAK and OSR1.</title>
        <authorList>
            <person name="Richardson C."/>
            <person name="Rafiqi F.H."/>
            <person name="Karlsson H.K."/>
            <person name="Moleleki N."/>
            <person name="Vandewalle A."/>
            <person name="Campbell D.G."/>
            <person name="Morrice N.A."/>
            <person name="Alessi D.R."/>
        </authorList>
    </citation>
    <scope>FUNCTION</scope>
    <scope>CATALYTIC ACTIVITY</scope>
</reference>
<reference key="18">
    <citation type="journal article" date="2010" name="Mol. Cell. Biol.">
        <title>SORLA/SORL1 functionally interacts with SPAK to control renal activation of Na(+)-K(+)-Cl(-) cotransporter 2.</title>
        <authorList>
            <person name="Reiche J."/>
            <person name="Theilig F."/>
            <person name="Rafiqi F.H."/>
            <person name="Carlo A.S."/>
            <person name="Militz D."/>
            <person name="Mutig K."/>
            <person name="Todiras M."/>
            <person name="Christensen E.I."/>
            <person name="Ellison D.H."/>
            <person name="Bader M."/>
            <person name="Nykjaer A."/>
            <person name="Bachmann S."/>
            <person name="Alessi D."/>
            <person name="Willnow T.E."/>
        </authorList>
    </citation>
    <scope>INTERACTION WITH SORL1</scope>
</reference>
<reference key="19">
    <citation type="journal article" date="2010" name="Sci. Signal.">
        <title>Quantitative phosphoproteomics reveals widespread full phosphorylation site occupancy during mitosis.</title>
        <authorList>
            <person name="Olsen J.V."/>
            <person name="Vermeulen M."/>
            <person name="Santamaria A."/>
            <person name="Kumar C."/>
            <person name="Miller M.L."/>
            <person name="Jensen L.J."/>
            <person name="Gnad F."/>
            <person name="Cox J."/>
            <person name="Jensen T.S."/>
            <person name="Nigg E.A."/>
            <person name="Brunak S."/>
            <person name="Mann M."/>
        </authorList>
    </citation>
    <scope>PHOSPHORYLATION [LARGE SCALE ANALYSIS] AT SER-385</scope>
    <scope>IDENTIFICATION BY MASS SPECTROMETRY [LARGE SCALE ANALYSIS]</scope>
    <source>
        <tissue>Cervix carcinoma</tissue>
    </source>
</reference>
<reference key="20">
    <citation type="journal article" date="2011" name="BMC Syst. Biol.">
        <title>Initial characterization of the human central proteome.</title>
        <authorList>
            <person name="Burkard T.R."/>
            <person name="Planyavsky M."/>
            <person name="Kaupe I."/>
            <person name="Breitwieser F.P."/>
            <person name="Buerckstuemmer T."/>
            <person name="Bennett K.L."/>
            <person name="Superti-Furga G."/>
            <person name="Colinge J."/>
        </authorList>
    </citation>
    <scope>IDENTIFICATION BY MASS SPECTROMETRY [LARGE SCALE ANALYSIS]</scope>
</reference>
<reference key="21">
    <citation type="journal article" date="2011" name="J. Cell Sci.">
        <title>Regulation of the NKCC2 ion cotransporter by SPAK-OSR1-dependent and -independent pathways.</title>
        <authorList>
            <person name="Richardson C."/>
            <person name="Sakamoto K."/>
            <person name="de los Heros P."/>
            <person name="Deak M."/>
            <person name="Campbell D.G."/>
            <person name="Prescott A.R."/>
            <person name="Alessi D.R."/>
        </authorList>
    </citation>
    <scope>FUNCTION</scope>
    <scope>CATALYTIC ACTIVITY</scope>
    <scope>ACTIVITY REGULATION</scope>
    <scope>PHOSPHORYLATION AT THR-231</scope>
    <scope>MUTAGENESIS OF THR-231</scope>
</reference>
<reference key="22">
    <citation type="journal article" date="2011" name="Sci. Signal.">
        <title>System-wide temporal characterization of the proteome and phosphoproteome of human embryonic stem cell differentiation.</title>
        <authorList>
            <person name="Rigbolt K.T."/>
            <person name="Prokhorova T.A."/>
            <person name="Akimov V."/>
            <person name="Henningsen J."/>
            <person name="Johansen P.T."/>
            <person name="Kratchmarova I."/>
            <person name="Kassem M."/>
            <person name="Mann M."/>
            <person name="Olsen J.V."/>
            <person name="Blagoev B."/>
        </authorList>
    </citation>
    <scope>PHOSPHORYLATION [LARGE SCALE ANALYSIS] AT SER-385</scope>
    <scope>IDENTIFICATION BY MASS SPECTROMETRY [LARGE SCALE ANALYSIS]</scope>
</reference>
<reference key="23">
    <citation type="journal article" date="2013" name="J. Proteome Res.">
        <title>Toward a comprehensive characterization of a human cancer cell phosphoproteome.</title>
        <authorList>
            <person name="Zhou H."/>
            <person name="Di Palma S."/>
            <person name="Preisinger C."/>
            <person name="Peng M."/>
            <person name="Polat A.N."/>
            <person name="Heck A.J."/>
            <person name="Mohammed S."/>
        </authorList>
    </citation>
    <scope>PHOSPHORYLATION [LARGE SCALE ANALYSIS] AT THR-354 AND SER-385</scope>
    <scope>IDENTIFICATION BY MASS SPECTROMETRY [LARGE SCALE ANALYSIS]</scope>
    <source>
        <tissue>Cervix carcinoma</tissue>
        <tissue>Erythroleukemia</tissue>
    </source>
</reference>
<reference key="24">
    <citation type="journal article" date="2021" name="Cell Rep.">
        <title>Phosphorylated WNK kinase networks in recoded bacteria recapitulate physiological function.</title>
        <authorList>
            <person name="Schiapparelli P."/>
            <person name="Pirman N.L."/>
            <person name="Mohler K."/>
            <person name="Miranda-Herrera P.A."/>
            <person name="Zarco N."/>
            <person name="Kilic O."/>
            <person name="Miller C."/>
            <person name="Shah S.R."/>
            <person name="Rogulina S."/>
            <person name="Hungerford W."/>
            <person name="Abriola L."/>
            <person name="Hoyer D."/>
            <person name="Turk B.E."/>
            <person name="Guerrero-Cazares H."/>
            <person name="Isaacs F.J."/>
            <person name="Quinones-Hinojosa A."/>
            <person name="Levchenko A."/>
            <person name="Rinehart J."/>
        </authorList>
    </citation>
    <scope>FUNCTION</scope>
    <scope>ACTIVITY REGULATION</scope>
    <scope>PHOSPHORYLATION AT THR-231</scope>
    <scope>MUTAGENESIS OF THR-231</scope>
</reference>